<name>SYY_EHRCJ</name>
<feature type="chain" id="PRO_0000234705" description="Tyrosine--tRNA ligase">
    <location>
        <begin position="1"/>
        <end position="418"/>
    </location>
</feature>
<feature type="domain" description="S4 RNA-binding" evidence="1">
    <location>
        <begin position="348"/>
        <end position="413"/>
    </location>
</feature>
<feature type="short sequence motif" description="'HIGH' region">
    <location>
        <begin position="43"/>
        <end position="52"/>
    </location>
</feature>
<feature type="short sequence motif" description="'KMSKS' region">
    <location>
        <begin position="235"/>
        <end position="239"/>
    </location>
</feature>
<feature type="binding site" evidence="1">
    <location>
        <position position="38"/>
    </location>
    <ligand>
        <name>L-tyrosine</name>
        <dbReference type="ChEBI" id="CHEBI:58315"/>
    </ligand>
</feature>
<feature type="binding site" evidence="1">
    <location>
        <position position="175"/>
    </location>
    <ligand>
        <name>L-tyrosine</name>
        <dbReference type="ChEBI" id="CHEBI:58315"/>
    </ligand>
</feature>
<feature type="binding site" evidence="1">
    <location>
        <position position="179"/>
    </location>
    <ligand>
        <name>L-tyrosine</name>
        <dbReference type="ChEBI" id="CHEBI:58315"/>
    </ligand>
</feature>
<feature type="binding site" evidence="1">
    <location>
        <position position="238"/>
    </location>
    <ligand>
        <name>ATP</name>
        <dbReference type="ChEBI" id="CHEBI:30616"/>
    </ligand>
</feature>
<keyword id="KW-0030">Aminoacyl-tRNA synthetase</keyword>
<keyword id="KW-0067">ATP-binding</keyword>
<keyword id="KW-0963">Cytoplasm</keyword>
<keyword id="KW-0436">Ligase</keyword>
<keyword id="KW-0547">Nucleotide-binding</keyword>
<keyword id="KW-0648">Protein biosynthesis</keyword>
<keyword id="KW-0694">RNA-binding</keyword>
<protein>
    <recommendedName>
        <fullName evidence="1">Tyrosine--tRNA ligase</fullName>
        <ecNumber evidence="1">6.1.1.1</ecNumber>
    </recommendedName>
    <alternativeName>
        <fullName evidence="1">Tyrosyl-tRNA synthetase</fullName>
        <shortName evidence="1">TyrRS</shortName>
    </alternativeName>
</protein>
<reference key="1">
    <citation type="journal article" date="2006" name="J. Bacteriol.">
        <title>The genome of the obligately intracellular bacterium Ehrlichia canis reveals themes of complex membrane structure and immune evasion strategies.</title>
        <authorList>
            <person name="Mavromatis K."/>
            <person name="Doyle C.K."/>
            <person name="Lykidis A."/>
            <person name="Ivanova N."/>
            <person name="Francino M.P."/>
            <person name="Chain P."/>
            <person name="Shin M."/>
            <person name="Malfatti S."/>
            <person name="Larimer F."/>
            <person name="Copeland A."/>
            <person name="Detter J.C."/>
            <person name="Land M."/>
            <person name="Richardson P.M."/>
            <person name="Yu X.J."/>
            <person name="Walker D.H."/>
            <person name="McBride J.W."/>
            <person name="Kyrpides N.C."/>
        </authorList>
    </citation>
    <scope>NUCLEOTIDE SEQUENCE [LARGE SCALE GENOMIC DNA]</scope>
    <source>
        <strain>Jake</strain>
    </source>
</reference>
<sequence>MKLESQFLSFLYSRGYFNQCTNVSALDQLMSKQCVPTYIGFDCTAKSLHVGSLVQIMILRYLQKFGHKPIVLLGNGTTKIGDPSGKDKSRTMLCSDEIEENALGIYDVLKKFIKFGSGSTDGLLVCNAEWLDDLNYIEFLRNIGRHFSVNNMLTFDSVRLRLEREQNLSFLEFNYMLLQSYDFVELNRRYNCLLQIGGSDQWGNIVSGVELGRKLQLSELFGLTTNLVLTSSGEKMGKTAQGAVWLNGDMYSPVDYWQYFRNVRDEDVGRFLKLFTELPLDKIKELELLQGHEINEAKKMLATEATKICHGEEIAKNIAADALKVFECNDDSGLSTFYVDRCDVDLGLPIIKLLQISGLEKSSSSARRLINDKGCKINDVVVLDVNYKLSLEHFCNASYVKLSCGKKRHLKIMLKSSF</sequence>
<evidence type="ECO:0000255" key="1">
    <source>
        <dbReference type="HAMAP-Rule" id="MF_02006"/>
    </source>
</evidence>
<proteinExistence type="inferred from homology"/>
<gene>
    <name evidence="1" type="primary">tyrS</name>
    <name type="ordered locus">Ecaj_0055</name>
</gene>
<accession>Q3YT49</accession>
<comment type="function">
    <text evidence="1">Catalyzes the attachment of tyrosine to tRNA(Tyr) in a two-step reaction: tyrosine is first activated by ATP to form Tyr-AMP and then transferred to the acceptor end of tRNA(Tyr).</text>
</comment>
<comment type="catalytic activity">
    <reaction evidence="1">
        <text>tRNA(Tyr) + L-tyrosine + ATP = L-tyrosyl-tRNA(Tyr) + AMP + diphosphate + H(+)</text>
        <dbReference type="Rhea" id="RHEA:10220"/>
        <dbReference type="Rhea" id="RHEA-COMP:9706"/>
        <dbReference type="Rhea" id="RHEA-COMP:9707"/>
        <dbReference type="ChEBI" id="CHEBI:15378"/>
        <dbReference type="ChEBI" id="CHEBI:30616"/>
        <dbReference type="ChEBI" id="CHEBI:33019"/>
        <dbReference type="ChEBI" id="CHEBI:58315"/>
        <dbReference type="ChEBI" id="CHEBI:78442"/>
        <dbReference type="ChEBI" id="CHEBI:78536"/>
        <dbReference type="ChEBI" id="CHEBI:456215"/>
        <dbReference type="EC" id="6.1.1.1"/>
    </reaction>
</comment>
<comment type="subunit">
    <text evidence="1">Homodimer.</text>
</comment>
<comment type="subcellular location">
    <subcellularLocation>
        <location evidence="1">Cytoplasm</location>
    </subcellularLocation>
</comment>
<comment type="similarity">
    <text evidence="1">Belongs to the class-I aminoacyl-tRNA synthetase family. TyrS type 1 subfamily.</text>
</comment>
<organism>
    <name type="scientific">Ehrlichia canis (strain Jake)</name>
    <dbReference type="NCBI Taxonomy" id="269484"/>
    <lineage>
        <taxon>Bacteria</taxon>
        <taxon>Pseudomonadati</taxon>
        <taxon>Pseudomonadota</taxon>
        <taxon>Alphaproteobacteria</taxon>
        <taxon>Rickettsiales</taxon>
        <taxon>Anaplasmataceae</taxon>
        <taxon>Ehrlichia</taxon>
    </lineage>
</organism>
<dbReference type="EC" id="6.1.1.1" evidence="1"/>
<dbReference type="EMBL" id="CP000107">
    <property type="protein sequence ID" value="AAZ68106.1"/>
    <property type="molecule type" value="Genomic_DNA"/>
</dbReference>
<dbReference type="RefSeq" id="WP_011304184.1">
    <property type="nucleotide sequence ID" value="NC_007354.1"/>
</dbReference>
<dbReference type="SMR" id="Q3YT49"/>
<dbReference type="FunCoup" id="Q3YT49">
    <property type="interactions" value="328"/>
</dbReference>
<dbReference type="STRING" id="269484.Ecaj_0055"/>
<dbReference type="KEGG" id="ecn:Ecaj_0055"/>
<dbReference type="eggNOG" id="COG0162">
    <property type="taxonomic scope" value="Bacteria"/>
</dbReference>
<dbReference type="HOGENOM" id="CLU_024003_0_3_5"/>
<dbReference type="InParanoid" id="Q3YT49"/>
<dbReference type="Proteomes" id="UP000000435">
    <property type="component" value="Chromosome"/>
</dbReference>
<dbReference type="GO" id="GO:0005829">
    <property type="term" value="C:cytosol"/>
    <property type="evidence" value="ECO:0007669"/>
    <property type="project" value="TreeGrafter"/>
</dbReference>
<dbReference type="GO" id="GO:0005524">
    <property type="term" value="F:ATP binding"/>
    <property type="evidence" value="ECO:0007669"/>
    <property type="project" value="UniProtKB-UniRule"/>
</dbReference>
<dbReference type="GO" id="GO:0003723">
    <property type="term" value="F:RNA binding"/>
    <property type="evidence" value="ECO:0007669"/>
    <property type="project" value="UniProtKB-KW"/>
</dbReference>
<dbReference type="GO" id="GO:0004831">
    <property type="term" value="F:tyrosine-tRNA ligase activity"/>
    <property type="evidence" value="ECO:0007669"/>
    <property type="project" value="UniProtKB-UniRule"/>
</dbReference>
<dbReference type="GO" id="GO:0006437">
    <property type="term" value="P:tyrosyl-tRNA aminoacylation"/>
    <property type="evidence" value="ECO:0007669"/>
    <property type="project" value="UniProtKB-UniRule"/>
</dbReference>
<dbReference type="CDD" id="cd00165">
    <property type="entry name" value="S4"/>
    <property type="match status" value="1"/>
</dbReference>
<dbReference type="CDD" id="cd00805">
    <property type="entry name" value="TyrRS_core"/>
    <property type="match status" value="1"/>
</dbReference>
<dbReference type="FunFam" id="1.10.240.10:FF:000001">
    <property type="entry name" value="Tyrosine--tRNA ligase"/>
    <property type="match status" value="1"/>
</dbReference>
<dbReference type="Gene3D" id="3.40.50.620">
    <property type="entry name" value="HUPs"/>
    <property type="match status" value="1"/>
</dbReference>
<dbReference type="Gene3D" id="3.10.290.10">
    <property type="entry name" value="RNA-binding S4 domain"/>
    <property type="match status" value="1"/>
</dbReference>
<dbReference type="Gene3D" id="1.10.240.10">
    <property type="entry name" value="Tyrosyl-Transfer RNA Synthetase"/>
    <property type="match status" value="1"/>
</dbReference>
<dbReference type="HAMAP" id="MF_02006">
    <property type="entry name" value="Tyr_tRNA_synth_type1"/>
    <property type="match status" value="1"/>
</dbReference>
<dbReference type="InterPro" id="IPR002305">
    <property type="entry name" value="aa-tRNA-synth_Ic"/>
</dbReference>
<dbReference type="InterPro" id="IPR014729">
    <property type="entry name" value="Rossmann-like_a/b/a_fold"/>
</dbReference>
<dbReference type="InterPro" id="IPR036986">
    <property type="entry name" value="S4_RNA-bd_sf"/>
</dbReference>
<dbReference type="InterPro" id="IPR002307">
    <property type="entry name" value="Tyr-tRNA-ligase"/>
</dbReference>
<dbReference type="InterPro" id="IPR024088">
    <property type="entry name" value="Tyr-tRNA-ligase_bac-type"/>
</dbReference>
<dbReference type="InterPro" id="IPR024107">
    <property type="entry name" value="Tyr-tRNA-ligase_bac_1"/>
</dbReference>
<dbReference type="NCBIfam" id="TIGR00234">
    <property type="entry name" value="tyrS"/>
    <property type="match status" value="1"/>
</dbReference>
<dbReference type="PANTHER" id="PTHR11766:SF0">
    <property type="entry name" value="TYROSINE--TRNA LIGASE, MITOCHONDRIAL"/>
    <property type="match status" value="1"/>
</dbReference>
<dbReference type="PANTHER" id="PTHR11766">
    <property type="entry name" value="TYROSYL-TRNA SYNTHETASE"/>
    <property type="match status" value="1"/>
</dbReference>
<dbReference type="Pfam" id="PF00579">
    <property type="entry name" value="tRNA-synt_1b"/>
    <property type="match status" value="1"/>
</dbReference>
<dbReference type="PRINTS" id="PR01040">
    <property type="entry name" value="TRNASYNTHTYR"/>
</dbReference>
<dbReference type="SUPFAM" id="SSF55174">
    <property type="entry name" value="Alpha-L RNA-binding motif"/>
    <property type="match status" value="1"/>
</dbReference>
<dbReference type="SUPFAM" id="SSF52374">
    <property type="entry name" value="Nucleotidylyl transferase"/>
    <property type="match status" value="1"/>
</dbReference>
<dbReference type="PROSITE" id="PS50889">
    <property type="entry name" value="S4"/>
    <property type="match status" value="1"/>
</dbReference>